<keyword id="KW-0240">DNA-directed RNA polymerase</keyword>
<keyword id="KW-0548">Nucleotidyltransferase</keyword>
<keyword id="KW-0804">Transcription</keyword>
<keyword id="KW-0808">Transferase</keyword>
<comment type="function">
    <text evidence="1">DNA-dependent RNA polymerase catalyzes the transcription of DNA into RNA using the four ribonucleoside triphosphates as substrates.</text>
</comment>
<comment type="catalytic activity">
    <reaction evidence="1">
        <text>RNA(n) + a ribonucleoside 5'-triphosphate = RNA(n+1) + diphosphate</text>
        <dbReference type="Rhea" id="RHEA:21248"/>
        <dbReference type="Rhea" id="RHEA-COMP:14527"/>
        <dbReference type="Rhea" id="RHEA-COMP:17342"/>
        <dbReference type="ChEBI" id="CHEBI:33019"/>
        <dbReference type="ChEBI" id="CHEBI:61557"/>
        <dbReference type="ChEBI" id="CHEBI:140395"/>
        <dbReference type="EC" id="2.7.7.6"/>
    </reaction>
</comment>
<comment type="subunit">
    <text evidence="1">Homodimer. The RNAP catalytic core consists of 2 alpha, 1 beta, 1 beta' and 1 omega subunit. When a sigma factor is associated with the core the holoenzyme is formed, which can initiate transcription.</text>
</comment>
<comment type="domain">
    <text evidence="1">The N-terminal domain is essential for RNAP assembly and basal transcription, whereas the C-terminal domain is involved in interaction with transcriptional regulators and with upstream promoter elements.</text>
</comment>
<comment type="similarity">
    <text evidence="1">Belongs to the RNA polymerase alpha chain family.</text>
</comment>
<evidence type="ECO:0000255" key="1">
    <source>
        <dbReference type="HAMAP-Rule" id="MF_00059"/>
    </source>
</evidence>
<name>RPOA_BRUA1</name>
<protein>
    <recommendedName>
        <fullName evidence="1">DNA-directed RNA polymerase subunit alpha</fullName>
        <shortName evidence="1">RNAP subunit alpha</shortName>
        <ecNumber evidence="1">2.7.7.6</ecNumber>
    </recommendedName>
    <alternativeName>
        <fullName evidence="1">RNA polymerase subunit alpha</fullName>
    </alternativeName>
    <alternativeName>
        <fullName evidence="1">Transcriptase subunit alpha</fullName>
    </alternativeName>
</protein>
<organism>
    <name type="scientific">Brucella abortus (strain S19)</name>
    <dbReference type="NCBI Taxonomy" id="430066"/>
    <lineage>
        <taxon>Bacteria</taxon>
        <taxon>Pseudomonadati</taxon>
        <taxon>Pseudomonadota</taxon>
        <taxon>Alphaproteobacteria</taxon>
        <taxon>Hyphomicrobiales</taxon>
        <taxon>Brucellaceae</taxon>
        <taxon>Brucella/Ochrobactrum group</taxon>
        <taxon>Brucella</taxon>
    </lineage>
</organism>
<feature type="chain" id="PRO_1000091924" description="DNA-directed RNA polymerase subunit alpha">
    <location>
        <begin position="1"/>
        <end position="337"/>
    </location>
</feature>
<feature type="region of interest" description="Alpha N-terminal domain (alpha-NTD)" evidence="1">
    <location>
        <begin position="1"/>
        <end position="233"/>
    </location>
</feature>
<feature type="region of interest" description="Alpha C-terminal domain (alpha-CTD)" evidence="1">
    <location>
        <begin position="249"/>
        <end position="337"/>
    </location>
</feature>
<proteinExistence type="inferred from homology"/>
<gene>
    <name evidence="1" type="primary">rpoA</name>
    <name type="ordered locus">BAbS19_I11470</name>
</gene>
<accession>B2S655</accession>
<sequence>MIQKNWQELIKPNKVDFITHGSRTHATVVAEPLERGFGLTLGNALRRVLLSSLRGAAVTAVQIDGVLHEFSSIPGVREDVTDIVLNIKEIAIRMEGEGPKRMVVRKEGPGVVTAGDIQTVGDVEILNPEHVICTLDEGAEIRMEFTVNTGKGYVPADRNRAEDAPIGLIPVDSLYSPVRKVSYKIENTREGQVLDYDKLTLNIETNGSVTGEDAVAYAARILQDQLSIFVNFEEPQKEAPQEQVAELAFNPALLKKVDELELSVRSANCLKNDNIVYIGDLIQKTEAEMLRTPNFGRKSLNEIKEVLASMGLHLGMEIPAWPPENIEDLAKRYEDQY</sequence>
<reference key="1">
    <citation type="journal article" date="2008" name="PLoS ONE">
        <title>Genome sequence of Brucella abortus vaccine strain S19 compared to virulent strains yields candidate virulence genes.</title>
        <authorList>
            <person name="Crasta O.R."/>
            <person name="Folkerts O."/>
            <person name="Fei Z."/>
            <person name="Mane S.P."/>
            <person name="Evans C."/>
            <person name="Martino-Catt S."/>
            <person name="Bricker B."/>
            <person name="Yu G."/>
            <person name="Du L."/>
            <person name="Sobral B.W."/>
        </authorList>
    </citation>
    <scope>NUCLEOTIDE SEQUENCE [LARGE SCALE GENOMIC DNA]</scope>
    <source>
        <strain>S19</strain>
    </source>
</reference>
<dbReference type="EC" id="2.7.7.6" evidence="1"/>
<dbReference type="EMBL" id="CP000887">
    <property type="protein sequence ID" value="ACD72652.1"/>
    <property type="molecule type" value="Genomic_DNA"/>
</dbReference>
<dbReference type="RefSeq" id="WP_002964338.1">
    <property type="nucleotide sequence ID" value="NC_010742.1"/>
</dbReference>
<dbReference type="SMR" id="B2S655"/>
<dbReference type="KEGG" id="bmc:BAbS19_I11470"/>
<dbReference type="HOGENOM" id="CLU_053084_0_0_5"/>
<dbReference type="Proteomes" id="UP000002565">
    <property type="component" value="Chromosome 1"/>
</dbReference>
<dbReference type="GO" id="GO:0005737">
    <property type="term" value="C:cytoplasm"/>
    <property type="evidence" value="ECO:0007669"/>
    <property type="project" value="UniProtKB-ARBA"/>
</dbReference>
<dbReference type="GO" id="GO:0000428">
    <property type="term" value="C:DNA-directed RNA polymerase complex"/>
    <property type="evidence" value="ECO:0007669"/>
    <property type="project" value="UniProtKB-KW"/>
</dbReference>
<dbReference type="GO" id="GO:0003677">
    <property type="term" value="F:DNA binding"/>
    <property type="evidence" value="ECO:0007669"/>
    <property type="project" value="UniProtKB-UniRule"/>
</dbReference>
<dbReference type="GO" id="GO:0003899">
    <property type="term" value="F:DNA-directed RNA polymerase activity"/>
    <property type="evidence" value="ECO:0007669"/>
    <property type="project" value="UniProtKB-UniRule"/>
</dbReference>
<dbReference type="GO" id="GO:0046983">
    <property type="term" value="F:protein dimerization activity"/>
    <property type="evidence" value="ECO:0007669"/>
    <property type="project" value="InterPro"/>
</dbReference>
<dbReference type="GO" id="GO:0006351">
    <property type="term" value="P:DNA-templated transcription"/>
    <property type="evidence" value="ECO:0007669"/>
    <property type="project" value="UniProtKB-UniRule"/>
</dbReference>
<dbReference type="CDD" id="cd06928">
    <property type="entry name" value="RNAP_alpha_NTD"/>
    <property type="match status" value="1"/>
</dbReference>
<dbReference type="FunFam" id="1.10.150.20:FF:000001">
    <property type="entry name" value="DNA-directed RNA polymerase subunit alpha"/>
    <property type="match status" value="1"/>
</dbReference>
<dbReference type="FunFam" id="2.170.120.12:FF:000001">
    <property type="entry name" value="DNA-directed RNA polymerase subunit alpha"/>
    <property type="match status" value="1"/>
</dbReference>
<dbReference type="Gene3D" id="1.10.150.20">
    <property type="entry name" value="5' to 3' exonuclease, C-terminal subdomain"/>
    <property type="match status" value="1"/>
</dbReference>
<dbReference type="Gene3D" id="2.170.120.12">
    <property type="entry name" value="DNA-directed RNA polymerase, insert domain"/>
    <property type="match status" value="1"/>
</dbReference>
<dbReference type="Gene3D" id="3.30.1360.10">
    <property type="entry name" value="RNA polymerase, RBP11-like subunit"/>
    <property type="match status" value="1"/>
</dbReference>
<dbReference type="HAMAP" id="MF_00059">
    <property type="entry name" value="RNApol_bact_RpoA"/>
    <property type="match status" value="1"/>
</dbReference>
<dbReference type="InterPro" id="IPR011262">
    <property type="entry name" value="DNA-dir_RNA_pol_insert"/>
</dbReference>
<dbReference type="InterPro" id="IPR011263">
    <property type="entry name" value="DNA-dir_RNA_pol_RpoA/D/Rpb3"/>
</dbReference>
<dbReference type="InterPro" id="IPR011773">
    <property type="entry name" value="DNA-dir_RpoA"/>
</dbReference>
<dbReference type="InterPro" id="IPR036603">
    <property type="entry name" value="RBP11-like"/>
</dbReference>
<dbReference type="InterPro" id="IPR011260">
    <property type="entry name" value="RNAP_asu_C"/>
</dbReference>
<dbReference type="InterPro" id="IPR036643">
    <property type="entry name" value="RNApol_insert_sf"/>
</dbReference>
<dbReference type="NCBIfam" id="NF003513">
    <property type="entry name" value="PRK05182.1-2"/>
    <property type="match status" value="1"/>
</dbReference>
<dbReference type="NCBIfam" id="NF003519">
    <property type="entry name" value="PRK05182.2-5"/>
    <property type="match status" value="1"/>
</dbReference>
<dbReference type="NCBIfam" id="TIGR02027">
    <property type="entry name" value="rpoA"/>
    <property type="match status" value="1"/>
</dbReference>
<dbReference type="Pfam" id="PF01000">
    <property type="entry name" value="RNA_pol_A_bac"/>
    <property type="match status" value="1"/>
</dbReference>
<dbReference type="Pfam" id="PF03118">
    <property type="entry name" value="RNA_pol_A_CTD"/>
    <property type="match status" value="1"/>
</dbReference>
<dbReference type="Pfam" id="PF01193">
    <property type="entry name" value="RNA_pol_L"/>
    <property type="match status" value="1"/>
</dbReference>
<dbReference type="SMART" id="SM00662">
    <property type="entry name" value="RPOLD"/>
    <property type="match status" value="1"/>
</dbReference>
<dbReference type="SUPFAM" id="SSF47789">
    <property type="entry name" value="C-terminal domain of RNA polymerase alpha subunit"/>
    <property type="match status" value="1"/>
</dbReference>
<dbReference type="SUPFAM" id="SSF56553">
    <property type="entry name" value="Insert subdomain of RNA polymerase alpha subunit"/>
    <property type="match status" value="1"/>
</dbReference>
<dbReference type="SUPFAM" id="SSF55257">
    <property type="entry name" value="RBP11-like subunits of RNA polymerase"/>
    <property type="match status" value="1"/>
</dbReference>